<reference key="1">
    <citation type="journal article" date="2005" name="Nucleic Acids Res.">
        <title>Genome dynamics and diversity of Shigella species, the etiologic agents of bacillary dysentery.</title>
        <authorList>
            <person name="Yang F."/>
            <person name="Yang J."/>
            <person name="Zhang X."/>
            <person name="Chen L."/>
            <person name="Jiang Y."/>
            <person name="Yan Y."/>
            <person name="Tang X."/>
            <person name="Wang J."/>
            <person name="Xiong Z."/>
            <person name="Dong J."/>
            <person name="Xue Y."/>
            <person name="Zhu Y."/>
            <person name="Xu X."/>
            <person name="Sun L."/>
            <person name="Chen S."/>
            <person name="Nie H."/>
            <person name="Peng J."/>
            <person name="Xu J."/>
            <person name="Wang Y."/>
            <person name="Yuan Z."/>
            <person name="Wen Y."/>
            <person name="Yao Z."/>
            <person name="Shen Y."/>
            <person name="Qiang B."/>
            <person name="Hou Y."/>
            <person name="Yu J."/>
            <person name="Jin Q."/>
        </authorList>
    </citation>
    <scope>NUCLEOTIDE SEQUENCE [LARGE SCALE GENOMIC DNA]</scope>
    <source>
        <strain>Ss046</strain>
    </source>
</reference>
<accession>Q3YVU2</accession>
<sequence>MMMNAFFPAMALMVLVGWSTPSPVQKAQRVKVDPLRSLNMEALCKDQAAKRYNTGEQKIDVTAFEQFQGSYEMRGYTFRKEQFVCSFDADGHFLHLSMR</sequence>
<organism>
    <name type="scientific">Shigella sonnei (strain Ss046)</name>
    <dbReference type="NCBI Taxonomy" id="300269"/>
    <lineage>
        <taxon>Bacteria</taxon>
        <taxon>Pseudomonadati</taxon>
        <taxon>Pseudomonadota</taxon>
        <taxon>Gammaproteobacteria</taxon>
        <taxon>Enterobacterales</taxon>
        <taxon>Enterobacteriaceae</taxon>
        <taxon>Shigella</taxon>
    </lineage>
</organism>
<proteinExistence type="inferred from homology"/>
<evidence type="ECO:0000255" key="1"/>
<dbReference type="EMBL" id="CP000038">
    <property type="protein sequence ID" value="AAZ90370.1"/>
    <property type="molecule type" value="Genomic_DNA"/>
</dbReference>
<dbReference type="RefSeq" id="WP_000980117.1">
    <property type="nucleotide sequence ID" value="NC_007384.1"/>
</dbReference>
<dbReference type="KEGG" id="ssn:SSON_3828"/>
<dbReference type="HOGENOM" id="CLU_162515_0_0_6"/>
<dbReference type="Proteomes" id="UP000002529">
    <property type="component" value="Chromosome"/>
</dbReference>
<dbReference type="InterPro" id="IPR025728">
    <property type="entry name" value="YsaB-like"/>
</dbReference>
<dbReference type="Pfam" id="PF13983">
    <property type="entry name" value="YsaB"/>
    <property type="match status" value="1"/>
</dbReference>
<protein>
    <recommendedName>
        <fullName>Uncharacterized protein YsaB</fullName>
    </recommendedName>
</protein>
<name>YSAB_SHISS</name>
<gene>
    <name type="primary">ysaB</name>
    <name type="ordered locus">SSON_3828</name>
</gene>
<feature type="signal peptide" evidence="1">
    <location>
        <begin position="1"/>
        <end position="26"/>
    </location>
</feature>
<feature type="chain" id="PRO_0000268620" description="Uncharacterized protein YsaB">
    <location>
        <begin position="27"/>
        <end position="99"/>
    </location>
</feature>
<keyword id="KW-1185">Reference proteome</keyword>
<keyword id="KW-0732">Signal</keyword>